<keyword id="KW-0560">Oxidoreductase</keyword>
<keyword id="KW-1185">Reference proteome</keyword>
<comment type="similarity">
    <text evidence="3">Belongs to the short-chain dehydrogenases/reductases (SDR) family.</text>
</comment>
<proteinExistence type="inferred from homology"/>
<dbReference type="EC" id="1.-.-.-"/>
<dbReference type="EMBL" id="M67471">
    <property type="protein sequence ID" value="AAA25288.1"/>
    <property type="molecule type" value="Genomic_DNA"/>
</dbReference>
<dbReference type="EMBL" id="AL591975">
    <property type="protein sequence ID" value="CAC98511.1"/>
    <property type="molecule type" value="Genomic_DNA"/>
</dbReference>
<dbReference type="PIR" id="AI1128">
    <property type="entry name" value="AI1128"/>
</dbReference>
<dbReference type="PIR" id="B39930">
    <property type="entry name" value="B39930"/>
</dbReference>
<dbReference type="RefSeq" id="NP_463961.1">
    <property type="nucleotide sequence ID" value="NC_003210.1"/>
</dbReference>
<dbReference type="RefSeq" id="WP_009931125.1">
    <property type="nucleotide sequence ID" value="NZ_CP149495.1"/>
</dbReference>
<dbReference type="SMR" id="P25145"/>
<dbReference type="STRING" id="169963.gene:17593083"/>
<dbReference type="PaxDb" id="169963-lmo0432"/>
<dbReference type="EnsemblBacteria" id="CAC98511">
    <property type="protein sequence ID" value="CAC98511"/>
    <property type="gene ID" value="CAC98511"/>
</dbReference>
<dbReference type="GeneID" id="985147"/>
<dbReference type="KEGG" id="lmo:lmo0432"/>
<dbReference type="PATRIC" id="fig|169963.11.peg.445"/>
<dbReference type="eggNOG" id="COG4221">
    <property type="taxonomic scope" value="Bacteria"/>
</dbReference>
<dbReference type="HOGENOM" id="CLU_010194_2_10_9"/>
<dbReference type="OrthoDB" id="9775296at2"/>
<dbReference type="PhylomeDB" id="P25145"/>
<dbReference type="BioCyc" id="LMON169963:LMO0432-MONOMER"/>
<dbReference type="Proteomes" id="UP000000817">
    <property type="component" value="Chromosome"/>
</dbReference>
<dbReference type="GO" id="GO:0016491">
    <property type="term" value="F:oxidoreductase activity"/>
    <property type="evidence" value="ECO:0007669"/>
    <property type="project" value="UniProtKB-KW"/>
</dbReference>
<dbReference type="CDD" id="cd05233">
    <property type="entry name" value="SDR_c"/>
    <property type="match status" value="1"/>
</dbReference>
<dbReference type="FunFam" id="3.40.50.720:FF:000047">
    <property type="entry name" value="NADP-dependent L-serine/L-allo-threonine dehydrogenase"/>
    <property type="match status" value="1"/>
</dbReference>
<dbReference type="Gene3D" id="3.40.50.720">
    <property type="entry name" value="NAD(P)-binding Rossmann-like Domain"/>
    <property type="match status" value="1"/>
</dbReference>
<dbReference type="InterPro" id="IPR036291">
    <property type="entry name" value="NAD(P)-bd_dom_sf"/>
</dbReference>
<dbReference type="InterPro" id="IPR020904">
    <property type="entry name" value="Sc_DH/Rdtase_CS"/>
</dbReference>
<dbReference type="InterPro" id="IPR002347">
    <property type="entry name" value="SDR_fam"/>
</dbReference>
<dbReference type="PANTHER" id="PTHR43115">
    <property type="entry name" value="DEHYDROGENASE/REDUCTASE SDR FAMILY MEMBER 11"/>
    <property type="match status" value="1"/>
</dbReference>
<dbReference type="PANTHER" id="PTHR43115:SF4">
    <property type="entry name" value="DEHYDROGENASE_REDUCTASE SDR FAMILY MEMBER 11"/>
    <property type="match status" value="1"/>
</dbReference>
<dbReference type="Pfam" id="PF00106">
    <property type="entry name" value="adh_short"/>
    <property type="match status" value="1"/>
</dbReference>
<dbReference type="PRINTS" id="PR00081">
    <property type="entry name" value="GDHRDH"/>
</dbReference>
<dbReference type="SUPFAM" id="SSF51735">
    <property type="entry name" value="NAD(P)-binding Rossmann-fold domains"/>
    <property type="match status" value="1"/>
</dbReference>
<dbReference type="PROSITE" id="PS00061">
    <property type="entry name" value="ADH_SHORT"/>
    <property type="match status" value="1"/>
</dbReference>
<gene>
    <name type="ordered locus">lmo0432</name>
</gene>
<accession>P25145</accession>
<organism>
    <name type="scientific">Listeria monocytogenes serovar 1/2a (strain ATCC BAA-679 / EGD-e)</name>
    <dbReference type="NCBI Taxonomy" id="169963"/>
    <lineage>
        <taxon>Bacteria</taxon>
        <taxon>Bacillati</taxon>
        <taxon>Bacillota</taxon>
        <taxon>Bacilli</taxon>
        <taxon>Bacillales</taxon>
        <taxon>Listeriaceae</taxon>
        <taxon>Listeria</taxon>
    </lineage>
</organism>
<name>Y432_LISMO</name>
<reference key="1">
    <citation type="journal article" date="1991" name="Cell">
        <title>Entry of L. monocytogenes into cells is mediated by internalin, a repeat protein reminiscent of surface antigens from Gram-positive cocci.</title>
        <authorList>
            <person name="Gaillard J.-L."/>
            <person name="Berche P."/>
            <person name="Frehel C."/>
            <person name="Gouin E."/>
            <person name="Cossart P."/>
        </authorList>
    </citation>
    <scope>NUCLEOTIDE SEQUENCE [GENOMIC DNA]</scope>
    <source>
        <strain>EGD / Serovar 1/2a</strain>
    </source>
</reference>
<reference key="2">
    <citation type="journal article" date="2001" name="Science">
        <title>Comparative genomics of Listeria species.</title>
        <authorList>
            <person name="Glaser P."/>
            <person name="Frangeul L."/>
            <person name="Buchrieser C."/>
            <person name="Rusniok C."/>
            <person name="Amend A."/>
            <person name="Baquero F."/>
            <person name="Berche P."/>
            <person name="Bloecker H."/>
            <person name="Brandt P."/>
            <person name="Chakraborty T."/>
            <person name="Charbit A."/>
            <person name="Chetouani F."/>
            <person name="Couve E."/>
            <person name="de Daruvar A."/>
            <person name="Dehoux P."/>
            <person name="Domann E."/>
            <person name="Dominguez-Bernal G."/>
            <person name="Duchaud E."/>
            <person name="Durant L."/>
            <person name="Dussurget O."/>
            <person name="Entian K.-D."/>
            <person name="Fsihi H."/>
            <person name="Garcia-del Portillo F."/>
            <person name="Garrido P."/>
            <person name="Gautier L."/>
            <person name="Goebel W."/>
            <person name="Gomez-Lopez N."/>
            <person name="Hain T."/>
            <person name="Hauf J."/>
            <person name="Jackson D."/>
            <person name="Jones L.-M."/>
            <person name="Kaerst U."/>
            <person name="Kreft J."/>
            <person name="Kuhn M."/>
            <person name="Kunst F."/>
            <person name="Kurapkat G."/>
            <person name="Madueno E."/>
            <person name="Maitournam A."/>
            <person name="Mata Vicente J."/>
            <person name="Ng E."/>
            <person name="Nedjari H."/>
            <person name="Nordsiek G."/>
            <person name="Novella S."/>
            <person name="de Pablos B."/>
            <person name="Perez-Diaz J.-C."/>
            <person name="Purcell R."/>
            <person name="Remmel B."/>
            <person name="Rose M."/>
            <person name="Schlueter T."/>
            <person name="Simoes N."/>
            <person name="Tierrez A."/>
            <person name="Vazquez-Boland J.-A."/>
            <person name="Voss H."/>
            <person name="Wehland J."/>
            <person name="Cossart P."/>
        </authorList>
    </citation>
    <scope>NUCLEOTIDE SEQUENCE [LARGE SCALE GENOMIC DNA]</scope>
    <source>
        <strain>ATCC BAA-679 / EGD-e</strain>
    </source>
</reference>
<protein>
    <recommendedName>
        <fullName>Uncharacterized oxidoreductase Lmo0432</fullName>
        <ecNumber>1.-.-.-</ecNumber>
    </recommendedName>
    <alternativeName>
        <fullName>ORFA</fullName>
    </alternativeName>
</protein>
<feature type="chain" id="PRO_0000054883" description="Uncharacterized oxidoreductase Lmo0432">
    <location>
        <begin position="1"/>
        <end position="248"/>
    </location>
</feature>
<feature type="active site" description="Proton acceptor" evidence="2">
    <location>
        <position position="154"/>
    </location>
</feature>
<feature type="binding site" evidence="1">
    <location>
        <begin position="9"/>
        <end position="33"/>
    </location>
    <ligand>
        <name>NADP(+)</name>
        <dbReference type="ChEBI" id="CHEBI:58349"/>
    </ligand>
</feature>
<feature type="binding site" evidence="1">
    <location>
        <position position="141"/>
    </location>
    <ligand>
        <name>substrate</name>
    </ligand>
</feature>
<feature type="sequence conflict" description="In Ref. 1; AAA25288." evidence="3" ref="1">
    <original>T</original>
    <variation>I</variation>
    <location>
        <position position="48"/>
    </location>
</feature>
<feature type="sequence conflict" description="In Ref. 1; AAA25288." evidence="3" ref="1">
    <original>V</original>
    <variation>A</variation>
    <location>
        <position position="182"/>
    </location>
</feature>
<sequence length="248" mass="26821">MTIKNKVIIITGASSGIGKATALLLAEKGAKLVLAARRVEKLEKIVQTIKANSGEAIFAKTDVTKREDNKKLVELAIERYGKVDAIFLNAGIMPNSPLSALKEDEWEQMIDINIKGVLNGIAAVLPSFIAQKSGHIIATSSVAGLKAYPGGAVYGATKWAVRDLMEVLRMESAQEGTNIRTVTIYPAAINTELLETITDKETEQGMTSLYKQYGITPDRIASIVAYAIDQPEDVNVNEFTVGPTSQPW</sequence>
<evidence type="ECO:0000250" key="1"/>
<evidence type="ECO:0000255" key="2">
    <source>
        <dbReference type="PROSITE-ProRule" id="PRU10001"/>
    </source>
</evidence>
<evidence type="ECO:0000305" key="3"/>